<evidence type="ECO:0000255" key="1"/>
<evidence type="ECO:0000255" key="2">
    <source>
        <dbReference type="PROSITE-ProRule" id="PRU00498"/>
    </source>
</evidence>
<evidence type="ECO:0000269" key="3">
    <source>
    </source>
</evidence>
<evidence type="ECO:0000303" key="4">
    <source>
    </source>
</evidence>
<evidence type="ECO:0000305" key="5"/>
<evidence type="ECO:0000312" key="6">
    <source>
        <dbReference type="EMBL" id="AAK92979.1"/>
    </source>
</evidence>
<evidence type="ECO:0000312" key="7">
    <source>
        <dbReference type="FlyBase" id="FBgn0033778"/>
    </source>
</evidence>
<evidence type="ECO:0000312" key="8">
    <source>
        <dbReference type="Proteomes" id="UP000000803"/>
    </source>
</evidence>
<protein>
    <recommendedName>
        <fullName evidence="4 7">Beta-alanine transporter</fullName>
        <shortName evidence="4 7">BalaT</shortName>
    </recommendedName>
</protein>
<feature type="chain" id="PRO_0000447217" description="Beta-alanine transporter" evidence="5">
    <location>
        <begin position="1"/>
        <end position="604"/>
    </location>
</feature>
<feature type="topological domain" description="Cytoplasmic" evidence="5">
    <location>
        <begin position="1"/>
        <end position="23"/>
    </location>
</feature>
<feature type="transmembrane region" description="Helical; Name=1" evidence="1">
    <location>
        <begin position="24"/>
        <end position="44"/>
    </location>
</feature>
<feature type="topological domain" description="Extracellular" evidence="5">
    <location>
        <begin position="45"/>
        <end position="151"/>
    </location>
</feature>
<feature type="transmembrane region" description="Helical; Name=2" evidence="1">
    <location>
        <begin position="152"/>
        <end position="172"/>
    </location>
</feature>
<feature type="topological domain" description="Cytoplasmic" evidence="5">
    <location>
        <begin position="173"/>
        <end position="182"/>
    </location>
</feature>
<feature type="transmembrane region" description="Helical; Name=3" evidence="1">
    <location>
        <begin position="183"/>
        <end position="203"/>
    </location>
</feature>
<feature type="topological domain" description="Extracellular" evidence="5">
    <location>
        <begin position="204"/>
        <end position="212"/>
    </location>
</feature>
<feature type="transmembrane region" description="Helical; Name=4" evidence="1">
    <location>
        <begin position="213"/>
        <end position="233"/>
    </location>
</feature>
<feature type="topological domain" description="Cytoplasmic" evidence="5">
    <location>
        <begin position="234"/>
        <end position="243"/>
    </location>
</feature>
<feature type="transmembrane region" description="Helical; Name=5" evidence="1">
    <location>
        <begin position="244"/>
        <end position="264"/>
    </location>
</feature>
<feature type="topological domain" description="Extracellular" evidence="5">
    <location>
        <begin position="265"/>
        <end position="268"/>
    </location>
</feature>
<feature type="transmembrane region" description="Helical; Name=6" evidence="1">
    <location>
        <begin position="269"/>
        <end position="289"/>
    </location>
</feature>
<feature type="topological domain" description="Cytoplasmic" evidence="5">
    <location>
        <begin position="290"/>
        <end position="362"/>
    </location>
</feature>
<feature type="transmembrane region" description="Helical; Name=7" evidence="1">
    <location>
        <begin position="363"/>
        <end position="383"/>
    </location>
</feature>
<feature type="topological domain" description="Extracellular" evidence="5">
    <location>
        <begin position="384"/>
        <end position="390"/>
    </location>
</feature>
<feature type="transmembrane region" description="Helical; Name=8" evidence="1">
    <location>
        <begin position="391"/>
        <end position="411"/>
    </location>
</feature>
<feature type="topological domain" description="Cytoplasmic" evidence="5">
    <location>
        <begin position="412"/>
        <end position="418"/>
    </location>
</feature>
<feature type="transmembrane region" description="Helical; Name=9" evidence="1">
    <location>
        <begin position="419"/>
        <end position="439"/>
    </location>
</feature>
<feature type="topological domain" description="Extracellular" evidence="5">
    <location>
        <begin position="440"/>
        <end position="442"/>
    </location>
</feature>
<feature type="transmembrane region" description="Helical; Name=10" evidence="1">
    <location>
        <begin position="443"/>
        <end position="463"/>
    </location>
</feature>
<feature type="topological domain" description="Cytoplasmic" evidence="5">
    <location>
        <begin position="464"/>
        <end position="473"/>
    </location>
</feature>
<feature type="transmembrane region" description="Helical; Name=11" evidence="1">
    <location>
        <begin position="474"/>
        <end position="494"/>
    </location>
</feature>
<feature type="topological domain" description="Extracellular" evidence="5">
    <location>
        <begin position="495"/>
        <end position="501"/>
    </location>
</feature>
<feature type="transmembrane region" description="Helical; Name=12" evidence="1">
    <location>
        <begin position="502"/>
        <end position="522"/>
    </location>
</feature>
<feature type="topological domain" description="Cytoplasmic" evidence="5">
    <location>
        <begin position="523"/>
        <end position="604"/>
    </location>
</feature>
<feature type="glycosylation site" description="N-linked (GlcNAc...) asparagine" evidence="2">
    <location>
        <position position="68"/>
    </location>
</feature>
<feature type="glycosylation site" description="N-linked (GlcNAc...) asparagine" evidence="2">
    <location>
        <position position="88"/>
    </location>
</feature>
<dbReference type="EMBL" id="AE013599">
    <property type="protein sequence ID" value="AAF58448.2"/>
    <property type="molecule type" value="Genomic_DNA"/>
</dbReference>
<dbReference type="EMBL" id="AY051555">
    <property type="protein sequence ID" value="AAK92979.1"/>
    <property type="molecule type" value="mRNA"/>
</dbReference>
<dbReference type="RefSeq" id="NP_610823.1">
    <property type="nucleotide sequence ID" value="NM_136979.3"/>
</dbReference>
<dbReference type="SMR" id="Q961J5"/>
<dbReference type="FunCoup" id="Q961J5">
    <property type="interactions" value="10"/>
</dbReference>
<dbReference type="IntAct" id="Q961J5">
    <property type="interactions" value="1"/>
</dbReference>
<dbReference type="STRING" id="7227.FBpp0086928"/>
<dbReference type="GlyCosmos" id="Q961J5">
    <property type="glycosylation" value="2 sites, No reported glycans"/>
</dbReference>
<dbReference type="GlyGen" id="Q961J5">
    <property type="glycosylation" value="2 sites"/>
</dbReference>
<dbReference type="PaxDb" id="7227-FBpp0086928"/>
<dbReference type="DNASU" id="36417"/>
<dbReference type="EnsemblMetazoa" id="FBtr0087815">
    <property type="protein sequence ID" value="FBpp0086928"/>
    <property type="gene ID" value="FBgn0033778"/>
</dbReference>
<dbReference type="GeneID" id="36417"/>
<dbReference type="KEGG" id="dme:Dmel_CG3790"/>
<dbReference type="UCSC" id="CG3790-RA">
    <property type="organism name" value="d. melanogaster"/>
</dbReference>
<dbReference type="AGR" id="FB:FBgn0033778"/>
<dbReference type="CTD" id="36417"/>
<dbReference type="FlyBase" id="FBgn0033778">
    <property type="gene designation" value="Balat"/>
</dbReference>
<dbReference type="VEuPathDB" id="VectorBase:FBgn0033778"/>
<dbReference type="eggNOG" id="KOG0255">
    <property type="taxonomic scope" value="Eukaryota"/>
</dbReference>
<dbReference type="GeneTree" id="ENSGT00940000173250"/>
<dbReference type="HOGENOM" id="CLU_001265_33_4_1"/>
<dbReference type="InParanoid" id="Q961J5"/>
<dbReference type="OMA" id="AIMATPY"/>
<dbReference type="OrthoDB" id="2544694at2759"/>
<dbReference type="PhylomeDB" id="Q961J5"/>
<dbReference type="Reactome" id="R-DME-112311">
    <property type="pathway name" value="Neurotransmitter clearance"/>
</dbReference>
<dbReference type="Reactome" id="R-DME-181430">
    <property type="pathway name" value="Norepinephrine Neurotransmitter Release Cycle"/>
</dbReference>
<dbReference type="Reactome" id="R-DME-197264">
    <property type="pathway name" value="Nicotinamide salvaging"/>
</dbReference>
<dbReference type="Reactome" id="R-DME-200425">
    <property type="pathway name" value="Carnitine shuttle"/>
</dbReference>
<dbReference type="Reactome" id="R-DME-2161517">
    <property type="pathway name" value="Abacavir transmembrane transport"/>
</dbReference>
<dbReference type="Reactome" id="R-DME-442660">
    <property type="pathway name" value="Na+/Cl- dependent neurotransmitter transporters"/>
</dbReference>
<dbReference type="Reactome" id="R-DME-549127">
    <property type="pathway name" value="Organic cation transport"/>
</dbReference>
<dbReference type="Reactome" id="R-DME-561048">
    <property type="pathway name" value="Organic anion transport"/>
</dbReference>
<dbReference type="Reactome" id="R-DME-917937">
    <property type="pathway name" value="Iron uptake and transport"/>
</dbReference>
<dbReference type="Reactome" id="R-DME-9749641">
    <property type="pathway name" value="Aspirin ADME"/>
</dbReference>
<dbReference type="Reactome" id="R-DME-9793528">
    <property type="pathway name" value="Ciprofloxacin ADME"/>
</dbReference>
<dbReference type="BioGRID-ORCS" id="36417">
    <property type="hits" value="0 hits in 1 CRISPR screen"/>
</dbReference>
<dbReference type="GenomeRNAi" id="36417"/>
<dbReference type="PRO" id="PR:Q961J5"/>
<dbReference type="Proteomes" id="UP000000803">
    <property type="component" value="Chromosome 2R"/>
</dbReference>
<dbReference type="Bgee" id="FBgn0033778">
    <property type="expression patterns" value="Expressed in adult optic chiasma glial cell (Drosophila) in brain and 4 other cell types or tissues"/>
</dbReference>
<dbReference type="GO" id="GO:0005886">
    <property type="term" value="C:plasma membrane"/>
    <property type="evidence" value="ECO:0000314"/>
    <property type="project" value="FlyBase"/>
</dbReference>
<dbReference type="GO" id="GO:0001761">
    <property type="term" value="F:beta-alanine transmembrane transporter activity"/>
    <property type="evidence" value="ECO:0000314"/>
    <property type="project" value="FlyBase"/>
</dbReference>
<dbReference type="GO" id="GO:0001762">
    <property type="term" value="P:beta-alanine transport"/>
    <property type="evidence" value="ECO:0000314"/>
    <property type="project" value="FlyBase"/>
</dbReference>
<dbReference type="GO" id="GO:0001694">
    <property type="term" value="P:histamine biosynthetic process"/>
    <property type="evidence" value="ECO:0000314"/>
    <property type="project" value="FlyBase"/>
</dbReference>
<dbReference type="CDD" id="cd17317">
    <property type="entry name" value="MFS_SLC22"/>
    <property type="match status" value="1"/>
</dbReference>
<dbReference type="FunFam" id="1.20.1250.20:FF:000760">
    <property type="entry name" value="Beta-alanine transporter"/>
    <property type="match status" value="1"/>
</dbReference>
<dbReference type="Gene3D" id="1.20.1250.20">
    <property type="entry name" value="MFS general substrate transporter like domains"/>
    <property type="match status" value="1"/>
</dbReference>
<dbReference type="InterPro" id="IPR020846">
    <property type="entry name" value="MFS_dom"/>
</dbReference>
<dbReference type="InterPro" id="IPR005828">
    <property type="entry name" value="MFS_sugar_transport-like"/>
</dbReference>
<dbReference type="InterPro" id="IPR036259">
    <property type="entry name" value="MFS_trans_sf"/>
</dbReference>
<dbReference type="PANTHER" id="PTHR24064">
    <property type="entry name" value="SOLUTE CARRIER FAMILY 22 MEMBER"/>
    <property type="match status" value="1"/>
</dbReference>
<dbReference type="Pfam" id="PF00083">
    <property type="entry name" value="Sugar_tr"/>
    <property type="match status" value="1"/>
</dbReference>
<dbReference type="SUPFAM" id="SSF103473">
    <property type="entry name" value="MFS general substrate transporter"/>
    <property type="match status" value="1"/>
</dbReference>
<dbReference type="PROSITE" id="PS50850">
    <property type="entry name" value="MFS"/>
    <property type="match status" value="1"/>
</dbReference>
<sequence length="604" mass="67905">MDFDEVLREVGSFGLYQKVIICSVLLPAALPCAFHAYSQLFIAATPQHFCRVPELEPWTQDYVQLVKNLSIPRNRNGAYAECSMYSRNYTDIVRYLEYRPPPDLLRQQAEDLLKLQPDTTQVVPCQHGWHYDKSIYSSTVVQEWNLVCDRSFLVTLALVVFGVGGLLGNYVFGYLVDLWGRRPSFYAYLLLEIIACAASAFAWNYYTWLGLRFVVGLTVPAILASPYVLAIELVGPERRVFCTIVSNIAYSLGLVVLAGVIYIVRDWRELSLAVSMPLLMLFSCFFVLPESPRWLMAVGKTRRAIKILKVMARVNGVRVNRDFVERLQRKLVITRAAETKSSMTTHYGILDLFRGPNMRRKTLIITLIWFANTSVYVGLSYYAPALGGDEIWNFFLAGAVELPTYLLLWPGLSYFGRRWILFISMLVGGVACVATFLYPDITLLLYCVGKMGISSSFVVLPLMASELYPTVVRGLGMSFSSVISMVGPIVIPMINHMGQQMLVLPLIVMGALLILGGFASLLLPETRNRNLPQTLEEGEAVPLSFLLCCCVESERKPNNIRASPKKRILPEAGTPVFHRVDTPVSDRVPCKIVCSICKNEMRTL</sequence>
<name>BALAT_DROME</name>
<gene>
    <name evidence="4 7" type="primary">Balat</name>
    <name evidence="7" type="ORF">CG3790</name>
</gene>
<proteinExistence type="evidence at transcript level"/>
<comment type="function">
    <text evidence="3">Beta-alanine transporter required for the uptake of beta-alanine by the glia (PubMed:28806173). Required for the recycling process of the neurotransmitter histamine in photoreceptor neurons of the compound eye and therefore for photoreceptor synaptic transmission (PubMed:28806173). Following histamine release from photoreceptors and its uptake by glia, histamine is conjugated to beta-alanine by e/Ebony to form the inactive metabolite, carcinine (PubMed:28806173).</text>
</comment>
<comment type="subcellular location">
    <subcellularLocation>
        <location evidence="3">Cell membrane</location>
        <topology evidence="1">Multi-pass membrane protein</topology>
    </subcellularLocation>
</comment>
<comment type="tissue specificity">
    <text evidence="3">Expressed in the head and predominantly in the retinal pigment cells of the compound eye.</text>
</comment>
<comment type="similarity">
    <text evidence="5">Belongs to the major facilitator (TC 2.A.1) superfamily. Organic cation transporter (TC 2.A.1.19) family.</text>
</comment>
<organism evidence="8">
    <name type="scientific">Drosophila melanogaster</name>
    <name type="common">Fruit fly</name>
    <dbReference type="NCBI Taxonomy" id="7227"/>
    <lineage>
        <taxon>Eukaryota</taxon>
        <taxon>Metazoa</taxon>
        <taxon>Ecdysozoa</taxon>
        <taxon>Arthropoda</taxon>
        <taxon>Hexapoda</taxon>
        <taxon>Insecta</taxon>
        <taxon>Pterygota</taxon>
        <taxon>Neoptera</taxon>
        <taxon>Endopterygota</taxon>
        <taxon>Diptera</taxon>
        <taxon>Brachycera</taxon>
        <taxon>Muscomorpha</taxon>
        <taxon>Ephydroidea</taxon>
        <taxon>Drosophilidae</taxon>
        <taxon>Drosophila</taxon>
        <taxon>Sophophora</taxon>
    </lineage>
</organism>
<keyword id="KW-0029">Amino-acid transport</keyword>
<keyword id="KW-1003">Cell membrane</keyword>
<keyword id="KW-0325">Glycoprotein</keyword>
<keyword id="KW-0472">Membrane</keyword>
<keyword id="KW-1185">Reference proteome</keyword>
<keyword id="KW-0812">Transmembrane</keyword>
<keyword id="KW-1133">Transmembrane helix</keyword>
<keyword id="KW-0813">Transport</keyword>
<accession>Q961J5</accession>
<accession>Q9V6H5</accession>
<reference evidence="8" key="1">
    <citation type="journal article" date="2000" name="Science">
        <title>The genome sequence of Drosophila melanogaster.</title>
        <authorList>
            <person name="Adams M.D."/>
            <person name="Celniker S.E."/>
            <person name="Holt R.A."/>
            <person name="Evans C.A."/>
            <person name="Gocayne J.D."/>
            <person name="Amanatides P.G."/>
            <person name="Scherer S.E."/>
            <person name="Li P.W."/>
            <person name="Hoskins R.A."/>
            <person name="Galle R.F."/>
            <person name="George R.A."/>
            <person name="Lewis S.E."/>
            <person name="Richards S."/>
            <person name="Ashburner M."/>
            <person name="Henderson S.N."/>
            <person name="Sutton G.G."/>
            <person name="Wortman J.R."/>
            <person name="Yandell M.D."/>
            <person name="Zhang Q."/>
            <person name="Chen L.X."/>
            <person name="Brandon R.C."/>
            <person name="Rogers Y.-H.C."/>
            <person name="Blazej R.G."/>
            <person name="Champe M."/>
            <person name="Pfeiffer B.D."/>
            <person name="Wan K.H."/>
            <person name="Doyle C."/>
            <person name="Baxter E.G."/>
            <person name="Helt G."/>
            <person name="Nelson C.R."/>
            <person name="Miklos G.L.G."/>
            <person name="Abril J.F."/>
            <person name="Agbayani A."/>
            <person name="An H.-J."/>
            <person name="Andrews-Pfannkoch C."/>
            <person name="Baldwin D."/>
            <person name="Ballew R.M."/>
            <person name="Basu A."/>
            <person name="Baxendale J."/>
            <person name="Bayraktaroglu L."/>
            <person name="Beasley E.M."/>
            <person name="Beeson K.Y."/>
            <person name="Benos P.V."/>
            <person name="Berman B.P."/>
            <person name="Bhandari D."/>
            <person name="Bolshakov S."/>
            <person name="Borkova D."/>
            <person name="Botchan M.R."/>
            <person name="Bouck J."/>
            <person name="Brokstein P."/>
            <person name="Brottier P."/>
            <person name="Burtis K.C."/>
            <person name="Busam D.A."/>
            <person name="Butler H."/>
            <person name="Cadieu E."/>
            <person name="Center A."/>
            <person name="Chandra I."/>
            <person name="Cherry J.M."/>
            <person name="Cawley S."/>
            <person name="Dahlke C."/>
            <person name="Davenport L.B."/>
            <person name="Davies P."/>
            <person name="de Pablos B."/>
            <person name="Delcher A."/>
            <person name="Deng Z."/>
            <person name="Mays A.D."/>
            <person name="Dew I."/>
            <person name="Dietz S.M."/>
            <person name="Dodson K."/>
            <person name="Doup L.E."/>
            <person name="Downes M."/>
            <person name="Dugan-Rocha S."/>
            <person name="Dunkov B.C."/>
            <person name="Dunn P."/>
            <person name="Durbin K.J."/>
            <person name="Evangelista C.C."/>
            <person name="Ferraz C."/>
            <person name="Ferriera S."/>
            <person name="Fleischmann W."/>
            <person name="Fosler C."/>
            <person name="Gabrielian A.E."/>
            <person name="Garg N.S."/>
            <person name="Gelbart W.M."/>
            <person name="Glasser K."/>
            <person name="Glodek A."/>
            <person name="Gong F."/>
            <person name="Gorrell J.H."/>
            <person name="Gu Z."/>
            <person name="Guan P."/>
            <person name="Harris M."/>
            <person name="Harris N.L."/>
            <person name="Harvey D.A."/>
            <person name="Heiman T.J."/>
            <person name="Hernandez J.R."/>
            <person name="Houck J."/>
            <person name="Hostin D."/>
            <person name="Houston K.A."/>
            <person name="Howland T.J."/>
            <person name="Wei M.-H."/>
            <person name="Ibegwam C."/>
            <person name="Jalali M."/>
            <person name="Kalush F."/>
            <person name="Karpen G.H."/>
            <person name="Ke Z."/>
            <person name="Kennison J.A."/>
            <person name="Ketchum K.A."/>
            <person name="Kimmel B.E."/>
            <person name="Kodira C.D."/>
            <person name="Kraft C.L."/>
            <person name="Kravitz S."/>
            <person name="Kulp D."/>
            <person name="Lai Z."/>
            <person name="Lasko P."/>
            <person name="Lei Y."/>
            <person name="Levitsky A.A."/>
            <person name="Li J.H."/>
            <person name="Li Z."/>
            <person name="Liang Y."/>
            <person name="Lin X."/>
            <person name="Liu X."/>
            <person name="Mattei B."/>
            <person name="McIntosh T.C."/>
            <person name="McLeod M.P."/>
            <person name="McPherson D."/>
            <person name="Merkulov G."/>
            <person name="Milshina N.V."/>
            <person name="Mobarry C."/>
            <person name="Morris J."/>
            <person name="Moshrefi A."/>
            <person name="Mount S.M."/>
            <person name="Moy M."/>
            <person name="Murphy B."/>
            <person name="Murphy L."/>
            <person name="Muzny D.M."/>
            <person name="Nelson D.L."/>
            <person name="Nelson D.R."/>
            <person name="Nelson K.A."/>
            <person name="Nixon K."/>
            <person name="Nusskern D.R."/>
            <person name="Pacleb J.M."/>
            <person name="Palazzolo M."/>
            <person name="Pittman G.S."/>
            <person name="Pan S."/>
            <person name="Pollard J."/>
            <person name="Puri V."/>
            <person name="Reese M.G."/>
            <person name="Reinert K."/>
            <person name="Remington K."/>
            <person name="Saunders R.D.C."/>
            <person name="Scheeler F."/>
            <person name="Shen H."/>
            <person name="Shue B.C."/>
            <person name="Siden-Kiamos I."/>
            <person name="Simpson M."/>
            <person name="Skupski M.P."/>
            <person name="Smith T.J."/>
            <person name="Spier E."/>
            <person name="Spradling A.C."/>
            <person name="Stapleton M."/>
            <person name="Strong R."/>
            <person name="Sun E."/>
            <person name="Svirskas R."/>
            <person name="Tector C."/>
            <person name="Turner R."/>
            <person name="Venter E."/>
            <person name="Wang A.H."/>
            <person name="Wang X."/>
            <person name="Wang Z.-Y."/>
            <person name="Wassarman D.A."/>
            <person name="Weinstock G.M."/>
            <person name="Weissenbach J."/>
            <person name="Williams S.M."/>
            <person name="Woodage T."/>
            <person name="Worley K.C."/>
            <person name="Wu D."/>
            <person name="Yang S."/>
            <person name="Yao Q.A."/>
            <person name="Ye J."/>
            <person name="Yeh R.-F."/>
            <person name="Zaveri J.S."/>
            <person name="Zhan M."/>
            <person name="Zhang G."/>
            <person name="Zhao Q."/>
            <person name="Zheng L."/>
            <person name="Zheng X.H."/>
            <person name="Zhong F.N."/>
            <person name="Zhong W."/>
            <person name="Zhou X."/>
            <person name="Zhu S.C."/>
            <person name="Zhu X."/>
            <person name="Smith H.O."/>
            <person name="Gibbs R.A."/>
            <person name="Myers E.W."/>
            <person name="Rubin G.M."/>
            <person name="Venter J.C."/>
        </authorList>
    </citation>
    <scope>NUCLEOTIDE SEQUENCE [LARGE SCALE GENOMIC DNA]</scope>
    <source>
        <strain evidence="8">Berkeley</strain>
    </source>
</reference>
<reference evidence="8" key="2">
    <citation type="journal article" date="2002" name="Genome Biol.">
        <title>Annotation of the Drosophila melanogaster euchromatic genome: a systematic review.</title>
        <authorList>
            <person name="Misra S."/>
            <person name="Crosby M.A."/>
            <person name="Mungall C.J."/>
            <person name="Matthews B.B."/>
            <person name="Campbell K.S."/>
            <person name="Hradecky P."/>
            <person name="Huang Y."/>
            <person name="Kaminker J.S."/>
            <person name="Millburn G.H."/>
            <person name="Prochnik S.E."/>
            <person name="Smith C.D."/>
            <person name="Tupy J.L."/>
            <person name="Whitfield E.J."/>
            <person name="Bayraktaroglu L."/>
            <person name="Berman B.P."/>
            <person name="Bettencourt B.R."/>
            <person name="Celniker S.E."/>
            <person name="de Grey A.D.N.J."/>
            <person name="Drysdale R.A."/>
            <person name="Harris N.L."/>
            <person name="Richter J."/>
            <person name="Russo S."/>
            <person name="Schroeder A.J."/>
            <person name="Shu S.Q."/>
            <person name="Stapleton M."/>
            <person name="Yamada C."/>
            <person name="Ashburner M."/>
            <person name="Gelbart W.M."/>
            <person name="Rubin G.M."/>
            <person name="Lewis S.E."/>
        </authorList>
    </citation>
    <scope>GENOME REANNOTATION</scope>
    <source>
        <strain evidence="8">Berkeley</strain>
    </source>
</reference>
<reference evidence="6" key="3">
    <citation type="journal article" date="2002" name="Genome Biol.">
        <title>A Drosophila full-length cDNA resource.</title>
        <authorList>
            <person name="Stapleton M."/>
            <person name="Carlson J.W."/>
            <person name="Brokstein P."/>
            <person name="Yu C."/>
            <person name="Champe M."/>
            <person name="George R.A."/>
            <person name="Guarin H."/>
            <person name="Kronmiller B."/>
            <person name="Pacleb J.M."/>
            <person name="Park S."/>
            <person name="Wan K.H."/>
            <person name="Rubin G.M."/>
            <person name="Celniker S.E."/>
        </authorList>
    </citation>
    <scope>NUCLEOTIDE SEQUENCE [LARGE SCALE MRNA]</scope>
    <source>
        <strain evidence="6">Berkeley</strain>
        <tissue evidence="6">Head</tissue>
    </source>
</reference>
<reference evidence="5" key="4">
    <citation type="journal article" date="2017" name="Elife">
        <title>The beta-alanine transporter BalaT is required for visual neurotransmission in Drosophila.</title>
        <authorList>
            <person name="Han Y."/>
            <person name="Xiong L."/>
            <person name="Xu Y."/>
            <person name="Tian T."/>
            <person name="Wang T."/>
        </authorList>
    </citation>
    <scope>FUNCTION</scope>
    <scope>SUBCELLULAR LOCATION</scope>
    <scope>TISSUE SPECIFICITY</scope>
</reference>